<name>CCMA_RHIME</name>
<comment type="function">
    <text evidence="1">Part of the ABC transporter complex CcmAB involved in the biogenesis of c-type cytochromes; once thought to export heme, this seems not to be the case, but its exact role is uncertain. Responsible for energy coupling to the transport system.</text>
</comment>
<comment type="catalytic activity">
    <reaction evidence="1">
        <text>heme b(in) + ATP + H2O = heme b(out) + ADP + phosphate + H(+)</text>
        <dbReference type="Rhea" id="RHEA:19261"/>
        <dbReference type="ChEBI" id="CHEBI:15377"/>
        <dbReference type="ChEBI" id="CHEBI:15378"/>
        <dbReference type="ChEBI" id="CHEBI:30616"/>
        <dbReference type="ChEBI" id="CHEBI:43474"/>
        <dbReference type="ChEBI" id="CHEBI:60344"/>
        <dbReference type="ChEBI" id="CHEBI:456216"/>
        <dbReference type="EC" id="7.6.2.5"/>
    </reaction>
</comment>
<comment type="subunit">
    <text evidence="1">The complex is composed of two ATP-binding proteins (CcmA) and two transmembrane proteins (CcmB).</text>
</comment>
<comment type="subcellular location">
    <subcellularLocation>
        <location evidence="1">Cell inner membrane</location>
        <topology evidence="1">Peripheral membrane protein</topology>
    </subcellularLocation>
</comment>
<comment type="similarity">
    <text evidence="1">Belongs to the ABC transporter superfamily. CcmA exporter (TC 3.A.1.107) family.</text>
</comment>
<sequence>MRLMAEGLSARRGEDLIFNDISFALAAGEALVVTGPNGAGKSTLLRVLAGLLEPEGGRVRLEDGPSGFEHPRELSHYLGHRNAMKRELTVEENLTFWQRFLGDSPGGSGIGLVEAAEAVGLADIIHLPFGYLSAGQQRRMAMAKLIVAFRPIWLLDEPTAALDLSADRLFAGLVAAHLDRGGIVVAATHQPLGFAGAKSLEMTGFVH</sequence>
<keyword id="KW-0067">ATP-binding</keyword>
<keyword id="KW-0997">Cell inner membrane</keyword>
<keyword id="KW-1003">Cell membrane</keyword>
<keyword id="KW-0201">Cytochrome c-type biogenesis</keyword>
<keyword id="KW-0472">Membrane</keyword>
<keyword id="KW-0547">Nucleotide-binding</keyword>
<keyword id="KW-1185">Reference proteome</keyword>
<keyword id="KW-1278">Translocase</keyword>
<keyword id="KW-0813">Transport</keyword>
<gene>
    <name evidence="1" type="primary">ccmA</name>
    <name type="ordered locus">R03230</name>
    <name type="ORF">SMc03847</name>
</gene>
<protein>
    <recommendedName>
        <fullName evidence="1">Cytochrome c biogenesis ATP-binding export protein CcmA</fullName>
        <ecNumber evidence="1">7.6.2.5</ecNumber>
    </recommendedName>
    <alternativeName>
        <fullName evidence="1">Heme exporter protein A</fullName>
    </alternativeName>
</protein>
<proteinExistence type="inferred from homology"/>
<organism>
    <name type="scientific">Rhizobium meliloti (strain 1021)</name>
    <name type="common">Ensifer meliloti</name>
    <name type="synonym">Sinorhizobium meliloti</name>
    <dbReference type="NCBI Taxonomy" id="266834"/>
    <lineage>
        <taxon>Bacteria</taxon>
        <taxon>Pseudomonadati</taxon>
        <taxon>Pseudomonadota</taxon>
        <taxon>Alphaproteobacteria</taxon>
        <taxon>Hyphomicrobiales</taxon>
        <taxon>Rhizobiaceae</taxon>
        <taxon>Sinorhizobium/Ensifer group</taxon>
        <taxon>Sinorhizobium</taxon>
    </lineage>
</organism>
<evidence type="ECO:0000255" key="1">
    <source>
        <dbReference type="HAMAP-Rule" id="MF_01707"/>
    </source>
</evidence>
<feature type="chain" id="PRO_0000092202" description="Cytochrome c biogenesis ATP-binding export protein CcmA">
    <location>
        <begin position="1"/>
        <end position="207"/>
    </location>
</feature>
<feature type="domain" description="ABC transporter" evidence="1">
    <location>
        <begin position="3"/>
        <end position="206"/>
    </location>
</feature>
<feature type="binding site" evidence="1">
    <location>
        <begin position="35"/>
        <end position="42"/>
    </location>
    <ligand>
        <name>ATP</name>
        <dbReference type="ChEBI" id="CHEBI:30616"/>
    </ligand>
</feature>
<accession>Q92L55</accession>
<reference key="1">
    <citation type="journal article" date="2001" name="Proc. Natl. Acad. Sci. U.S.A.">
        <title>Analysis of the chromosome sequence of the legume symbiont Sinorhizobium meliloti strain 1021.</title>
        <authorList>
            <person name="Capela D."/>
            <person name="Barloy-Hubler F."/>
            <person name="Gouzy J."/>
            <person name="Bothe G."/>
            <person name="Ampe F."/>
            <person name="Batut J."/>
            <person name="Boistard P."/>
            <person name="Becker A."/>
            <person name="Boutry M."/>
            <person name="Cadieu E."/>
            <person name="Dreano S."/>
            <person name="Gloux S."/>
            <person name="Godrie T."/>
            <person name="Goffeau A."/>
            <person name="Kahn D."/>
            <person name="Kiss E."/>
            <person name="Lelaure V."/>
            <person name="Masuy D."/>
            <person name="Pohl T."/>
            <person name="Portetelle D."/>
            <person name="Puehler A."/>
            <person name="Purnelle B."/>
            <person name="Ramsperger U."/>
            <person name="Renard C."/>
            <person name="Thebault P."/>
            <person name="Vandenbol M."/>
            <person name="Weidner S."/>
            <person name="Galibert F."/>
        </authorList>
    </citation>
    <scope>NUCLEOTIDE SEQUENCE [LARGE SCALE GENOMIC DNA]</scope>
    <source>
        <strain>1021</strain>
    </source>
</reference>
<reference key="2">
    <citation type="journal article" date="2001" name="Science">
        <title>The composite genome of the legume symbiont Sinorhizobium meliloti.</title>
        <authorList>
            <person name="Galibert F."/>
            <person name="Finan T.M."/>
            <person name="Long S.R."/>
            <person name="Puehler A."/>
            <person name="Abola P."/>
            <person name="Ampe F."/>
            <person name="Barloy-Hubler F."/>
            <person name="Barnett M.J."/>
            <person name="Becker A."/>
            <person name="Boistard P."/>
            <person name="Bothe G."/>
            <person name="Boutry M."/>
            <person name="Bowser L."/>
            <person name="Buhrmester J."/>
            <person name="Cadieu E."/>
            <person name="Capela D."/>
            <person name="Chain P."/>
            <person name="Cowie A."/>
            <person name="Davis R.W."/>
            <person name="Dreano S."/>
            <person name="Federspiel N.A."/>
            <person name="Fisher R.F."/>
            <person name="Gloux S."/>
            <person name="Godrie T."/>
            <person name="Goffeau A."/>
            <person name="Golding B."/>
            <person name="Gouzy J."/>
            <person name="Gurjal M."/>
            <person name="Hernandez-Lucas I."/>
            <person name="Hong A."/>
            <person name="Huizar L."/>
            <person name="Hyman R.W."/>
            <person name="Jones T."/>
            <person name="Kahn D."/>
            <person name="Kahn M.L."/>
            <person name="Kalman S."/>
            <person name="Keating D.H."/>
            <person name="Kiss E."/>
            <person name="Komp C."/>
            <person name="Lelaure V."/>
            <person name="Masuy D."/>
            <person name="Palm C."/>
            <person name="Peck M.C."/>
            <person name="Pohl T.M."/>
            <person name="Portetelle D."/>
            <person name="Purnelle B."/>
            <person name="Ramsperger U."/>
            <person name="Surzycki R."/>
            <person name="Thebault P."/>
            <person name="Vandenbol M."/>
            <person name="Vorhoelter F.J."/>
            <person name="Weidner S."/>
            <person name="Wells D.H."/>
            <person name="Wong K."/>
            <person name="Yeh K.-C."/>
            <person name="Batut J."/>
        </authorList>
    </citation>
    <scope>NUCLEOTIDE SEQUENCE [LARGE SCALE GENOMIC DNA]</scope>
    <source>
        <strain>1021</strain>
    </source>
</reference>
<dbReference type="EC" id="7.6.2.5" evidence="1"/>
<dbReference type="EMBL" id="AL591688">
    <property type="protein sequence ID" value="CAC47809.1"/>
    <property type="molecule type" value="Genomic_DNA"/>
</dbReference>
<dbReference type="RefSeq" id="NP_387336.1">
    <property type="nucleotide sequence ID" value="NC_003047.1"/>
</dbReference>
<dbReference type="RefSeq" id="WP_003529713.1">
    <property type="nucleotide sequence ID" value="NC_003047.1"/>
</dbReference>
<dbReference type="SMR" id="Q92L55"/>
<dbReference type="EnsemblBacteria" id="CAC47809">
    <property type="protein sequence ID" value="CAC47809"/>
    <property type="gene ID" value="SMc03847"/>
</dbReference>
<dbReference type="GeneID" id="89574206"/>
<dbReference type="KEGG" id="sme:SMc03847"/>
<dbReference type="PATRIC" id="fig|266834.11.peg.4783"/>
<dbReference type="eggNOG" id="COG4133">
    <property type="taxonomic scope" value="Bacteria"/>
</dbReference>
<dbReference type="HOGENOM" id="CLU_000604_1_2_5"/>
<dbReference type="OrthoDB" id="9800654at2"/>
<dbReference type="Proteomes" id="UP000001976">
    <property type="component" value="Chromosome"/>
</dbReference>
<dbReference type="GO" id="GO:0005886">
    <property type="term" value="C:plasma membrane"/>
    <property type="evidence" value="ECO:0007669"/>
    <property type="project" value="UniProtKB-SubCell"/>
</dbReference>
<dbReference type="GO" id="GO:0015439">
    <property type="term" value="F:ABC-type heme transporter activity"/>
    <property type="evidence" value="ECO:0007669"/>
    <property type="project" value="UniProtKB-EC"/>
</dbReference>
<dbReference type="GO" id="GO:0005524">
    <property type="term" value="F:ATP binding"/>
    <property type="evidence" value="ECO:0007669"/>
    <property type="project" value="UniProtKB-KW"/>
</dbReference>
<dbReference type="GO" id="GO:0016887">
    <property type="term" value="F:ATP hydrolysis activity"/>
    <property type="evidence" value="ECO:0007669"/>
    <property type="project" value="InterPro"/>
</dbReference>
<dbReference type="GO" id="GO:0017004">
    <property type="term" value="P:cytochrome complex assembly"/>
    <property type="evidence" value="ECO:0007669"/>
    <property type="project" value="UniProtKB-KW"/>
</dbReference>
<dbReference type="Gene3D" id="3.40.50.300">
    <property type="entry name" value="P-loop containing nucleotide triphosphate hydrolases"/>
    <property type="match status" value="1"/>
</dbReference>
<dbReference type="InterPro" id="IPR003593">
    <property type="entry name" value="AAA+_ATPase"/>
</dbReference>
<dbReference type="InterPro" id="IPR003439">
    <property type="entry name" value="ABC_transporter-like_ATP-bd"/>
</dbReference>
<dbReference type="InterPro" id="IPR017871">
    <property type="entry name" value="ABC_transporter-like_CS"/>
</dbReference>
<dbReference type="InterPro" id="IPR005895">
    <property type="entry name" value="ABC_transptr_haem_export_CcmA"/>
</dbReference>
<dbReference type="InterPro" id="IPR027417">
    <property type="entry name" value="P-loop_NTPase"/>
</dbReference>
<dbReference type="NCBIfam" id="TIGR01189">
    <property type="entry name" value="ccmA"/>
    <property type="match status" value="1"/>
</dbReference>
<dbReference type="PANTHER" id="PTHR43499">
    <property type="entry name" value="ABC TRANSPORTER I FAMILY MEMBER 1"/>
    <property type="match status" value="1"/>
</dbReference>
<dbReference type="PANTHER" id="PTHR43499:SF1">
    <property type="entry name" value="ABC TRANSPORTER I FAMILY MEMBER 1"/>
    <property type="match status" value="1"/>
</dbReference>
<dbReference type="Pfam" id="PF00005">
    <property type="entry name" value="ABC_tran"/>
    <property type="match status" value="1"/>
</dbReference>
<dbReference type="SMART" id="SM00382">
    <property type="entry name" value="AAA"/>
    <property type="match status" value="1"/>
</dbReference>
<dbReference type="SUPFAM" id="SSF52540">
    <property type="entry name" value="P-loop containing nucleoside triphosphate hydrolases"/>
    <property type="match status" value="1"/>
</dbReference>
<dbReference type="PROSITE" id="PS00211">
    <property type="entry name" value="ABC_TRANSPORTER_1"/>
    <property type="match status" value="1"/>
</dbReference>
<dbReference type="PROSITE" id="PS50893">
    <property type="entry name" value="ABC_TRANSPORTER_2"/>
    <property type="match status" value="1"/>
</dbReference>
<dbReference type="PROSITE" id="PS51243">
    <property type="entry name" value="CCMA"/>
    <property type="match status" value="1"/>
</dbReference>